<keyword id="KW-0238">DNA-binding</keyword>
<keyword id="KW-0479">Metal-binding</keyword>
<keyword id="KW-0539">Nucleus</keyword>
<keyword id="KW-0597">Phosphoprotein</keyword>
<keyword id="KW-1185">Reference proteome</keyword>
<keyword id="KW-0677">Repeat</keyword>
<keyword id="KW-0804">Transcription</keyword>
<keyword id="KW-0805">Transcription regulation</keyword>
<keyword id="KW-0862">Zinc</keyword>
<keyword id="KW-0863">Zinc-finger</keyword>
<dbReference type="EMBL" id="AK050452">
    <property type="protein sequence ID" value="BAC34264.1"/>
    <property type="molecule type" value="mRNA"/>
</dbReference>
<dbReference type="CCDS" id="CCDS20755.1"/>
<dbReference type="RefSeq" id="NP_001034621.1">
    <property type="nucleotide sequence ID" value="NM_001039532.2"/>
</dbReference>
<dbReference type="SMR" id="Q8BI69"/>
<dbReference type="FunCoup" id="Q8BI69">
    <property type="interactions" value="836"/>
</dbReference>
<dbReference type="STRING" id="10090.ENSMUSP00000051979"/>
<dbReference type="GlyGen" id="Q8BI69">
    <property type="glycosylation" value="1 site"/>
</dbReference>
<dbReference type="PhosphoSitePlus" id="Q8BI69"/>
<dbReference type="PaxDb" id="10090-ENSMUSP00000051979"/>
<dbReference type="ProteomicsDB" id="275299"/>
<dbReference type="Antibodypedia" id="46462">
    <property type="antibodies" value="25 antibodies from 12 providers"/>
</dbReference>
<dbReference type="Ensembl" id="ENSMUST00000062428.5">
    <property type="protein sequence ID" value="ENSMUSP00000051979.5"/>
    <property type="gene ID" value="ENSMUSG00000043290.7"/>
</dbReference>
<dbReference type="GeneID" id="654801"/>
<dbReference type="KEGG" id="mmu:654801"/>
<dbReference type="UCSC" id="uc009ezn.2">
    <property type="organism name" value="mouse"/>
</dbReference>
<dbReference type="AGR" id="MGI:3606042"/>
<dbReference type="CTD" id="654801"/>
<dbReference type="MGI" id="MGI:3606042">
    <property type="gene designation" value="Zfp784"/>
</dbReference>
<dbReference type="VEuPathDB" id="HostDB:ENSMUSG00000043290"/>
<dbReference type="eggNOG" id="KOG1721">
    <property type="taxonomic scope" value="Eukaryota"/>
</dbReference>
<dbReference type="GeneTree" id="ENSGT00940000162820"/>
<dbReference type="HOGENOM" id="CLU_055458_0_0_1"/>
<dbReference type="InParanoid" id="Q8BI69"/>
<dbReference type="OMA" id="GHSCAGP"/>
<dbReference type="OrthoDB" id="9439903at2759"/>
<dbReference type="PhylomeDB" id="Q8BI69"/>
<dbReference type="TreeFam" id="TF337573"/>
<dbReference type="BioGRID-ORCS" id="654801">
    <property type="hits" value="6 hits in 76 CRISPR screens"/>
</dbReference>
<dbReference type="PRO" id="PR:Q8BI69"/>
<dbReference type="Proteomes" id="UP000000589">
    <property type="component" value="Chromosome 7"/>
</dbReference>
<dbReference type="RNAct" id="Q8BI69">
    <property type="molecule type" value="protein"/>
</dbReference>
<dbReference type="Bgee" id="ENSMUSG00000043290">
    <property type="expression patterns" value="Expressed in ear vesicle and 169 other cell types or tissues"/>
</dbReference>
<dbReference type="ExpressionAtlas" id="Q8BI69">
    <property type="expression patterns" value="baseline and differential"/>
</dbReference>
<dbReference type="GO" id="GO:0005634">
    <property type="term" value="C:nucleus"/>
    <property type="evidence" value="ECO:0007669"/>
    <property type="project" value="UniProtKB-SubCell"/>
</dbReference>
<dbReference type="GO" id="GO:1990837">
    <property type="term" value="F:sequence-specific double-stranded DNA binding"/>
    <property type="evidence" value="ECO:0007669"/>
    <property type="project" value="Ensembl"/>
</dbReference>
<dbReference type="GO" id="GO:0008270">
    <property type="term" value="F:zinc ion binding"/>
    <property type="evidence" value="ECO:0007669"/>
    <property type="project" value="UniProtKB-KW"/>
</dbReference>
<dbReference type="GO" id="GO:0002244">
    <property type="term" value="P:hematopoietic progenitor cell differentiation"/>
    <property type="evidence" value="ECO:0000315"/>
    <property type="project" value="MGI"/>
</dbReference>
<dbReference type="FunFam" id="3.30.160.60:FF:000446">
    <property type="entry name" value="Zinc finger protein"/>
    <property type="match status" value="1"/>
</dbReference>
<dbReference type="FunFam" id="3.30.160.60:FF:000787">
    <property type="entry name" value="Zinc finger protein 784"/>
    <property type="match status" value="1"/>
</dbReference>
<dbReference type="FunFam" id="3.30.160.60:FF:000585">
    <property type="entry name" value="zinc finger protein 784"/>
    <property type="match status" value="1"/>
</dbReference>
<dbReference type="FunFam" id="3.30.160.60:FF:001426">
    <property type="entry name" value="zinc finger protein 784"/>
    <property type="match status" value="1"/>
</dbReference>
<dbReference type="Gene3D" id="3.30.160.60">
    <property type="entry name" value="Classic Zinc Finger"/>
    <property type="match status" value="5"/>
</dbReference>
<dbReference type="InterPro" id="IPR036236">
    <property type="entry name" value="Znf_C2H2_sf"/>
</dbReference>
<dbReference type="InterPro" id="IPR013087">
    <property type="entry name" value="Znf_C2H2_type"/>
</dbReference>
<dbReference type="PANTHER" id="PTHR24379">
    <property type="entry name" value="KRAB AND ZINC FINGER DOMAIN-CONTAINING"/>
    <property type="match status" value="1"/>
</dbReference>
<dbReference type="PANTHER" id="PTHR24379:SF133">
    <property type="entry name" value="ZFP617 PROTEIN-RELATED"/>
    <property type="match status" value="1"/>
</dbReference>
<dbReference type="Pfam" id="PF00096">
    <property type="entry name" value="zf-C2H2"/>
    <property type="match status" value="3"/>
</dbReference>
<dbReference type="SMART" id="SM00355">
    <property type="entry name" value="ZnF_C2H2"/>
    <property type="match status" value="6"/>
</dbReference>
<dbReference type="SUPFAM" id="SSF57667">
    <property type="entry name" value="beta-beta-alpha zinc fingers"/>
    <property type="match status" value="3"/>
</dbReference>
<dbReference type="PROSITE" id="PS00028">
    <property type="entry name" value="ZINC_FINGER_C2H2_1"/>
    <property type="match status" value="6"/>
</dbReference>
<dbReference type="PROSITE" id="PS50157">
    <property type="entry name" value="ZINC_FINGER_C2H2_2"/>
    <property type="match status" value="6"/>
</dbReference>
<gene>
    <name type="primary">Znf784</name>
    <name type="synonym">Zfp784</name>
</gene>
<evidence type="ECO:0000250" key="1">
    <source>
        <dbReference type="UniProtKB" id="Q8NCA9"/>
    </source>
</evidence>
<evidence type="ECO:0000255" key="2">
    <source>
        <dbReference type="PROSITE-ProRule" id="PRU00042"/>
    </source>
</evidence>
<evidence type="ECO:0000256" key="3">
    <source>
        <dbReference type="SAM" id="MobiDB-lite"/>
    </source>
</evidence>
<evidence type="ECO:0000305" key="4"/>
<name>ZN784_MOUSE</name>
<reference key="1">
    <citation type="journal article" date="2005" name="Science">
        <title>The transcriptional landscape of the mammalian genome.</title>
        <authorList>
            <person name="Carninci P."/>
            <person name="Kasukawa T."/>
            <person name="Katayama S."/>
            <person name="Gough J."/>
            <person name="Frith M.C."/>
            <person name="Maeda N."/>
            <person name="Oyama R."/>
            <person name="Ravasi T."/>
            <person name="Lenhard B."/>
            <person name="Wells C."/>
            <person name="Kodzius R."/>
            <person name="Shimokawa K."/>
            <person name="Bajic V.B."/>
            <person name="Brenner S.E."/>
            <person name="Batalov S."/>
            <person name="Forrest A.R."/>
            <person name="Zavolan M."/>
            <person name="Davis M.J."/>
            <person name="Wilming L.G."/>
            <person name="Aidinis V."/>
            <person name="Allen J.E."/>
            <person name="Ambesi-Impiombato A."/>
            <person name="Apweiler R."/>
            <person name="Aturaliya R.N."/>
            <person name="Bailey T.L."/>
            <person name="Bansal M."/>
            <person name="Baxter L."/>
            <person name="Beisel K.W."/>
            <person name="Bersano T."/>
            <person name="Bono H."/>
            <person name="Chalk A.M."/>
            <person name="Chiu K.P."/>
            <person name="Choudhary V."/>
            <person name="Christoffels A."/>
            <person name="Clutterbuck D.R."/>
            <person name="Crowe M.L."/>
            <person name="Dalla E."/>
            <person name="Dalrymple B.P."/>
            <person name="de Bono B."/>
            <person name="Della Gatta G."/>
            <person name="di Bernardo D."/>
            <person name="Down T."/>
            <person name="Engstrom P."/>
            <person name="Fagiolini M."/>
            <person name="Faulkner G."/>
            <person name="Fletcher C.F."/>
            <person name="Fukushima T."/>
            <person name="Furuno M."/>
            <person name="Futaki S."/>
            <person name="Gariboldi M."/>
            <person name="Georgii-Hemming P."/>
            <person name="Gingeras T.R."/>
            <person name="Gojobori T."/>
            <person name="Green R.E."/>
            <person name="Gustincich S."/>
            <person name="Harbers M."/>
            <person name="Hayashi Y."/>
            <person name="Hensch T.K."/>
            <person name="Hirokawa N."/>
            <person name="Hill D."/>
            <person name="Huminiecki L."/>
            <person name="Iacono M."/>
            <person name="Ikeo K."/>
            <person name="Iwama A."/>
            <person name="Ishikawa T."/>
            <person name="Jakt M."/>
            <person name="Kanapin A."/>
            <person name="Katoh M."/>
            <person name="Kawasawa Y."/>
            <person name="Kelso J."/>
            <person name="Kitamura H."/>
            <person name="Kitano H."/>
            <person name="Kollias G."/>
            <person name="Krishnan S.P."/>
            <person name="Kruger A."/>
            <person name="Kummerfeld S.K."/>
            <person name="Kurochkin I.V."/>
            <person name="Lareau L.F."/>
            <person name="Lazarevic D."/>
            <person name="Lipovich L."/>
            <person name="Liu J."/>
            <person name="Liuni S."/>
            <person name="McWilliam S."/>
            <person name="Madan Babu M."/>
            <person name="Madera M."/>
            <person name="Marchionni L."/>
            <person name="Matsuda H."/>
            <person name="Matsuzawa S."/>
            <person name="Miki H."/>
            <person name="Mignone F."/>
            <person name="Miyake S."/>
            <person name="Morris K."/>
            <person name="Mottagui-Tabar S."/>
            <person name="Mulder N."/>
            <person name="Nakano N."/>
            <person name="Nakauchi H."/>
            <person name="Ng P."/>
            <person name="Nilsson R."/>
            <person name="Nishiguchi S."/>
            <person name="Nishikawa S."/>
            <person name="Nori F."/>
            <person name="Ohara O."/>
            <person name="Okazaki Y."/>
            <person name="Orlando V."/>
            <person name="Pang K.C."/>
            <person name="Pavan W.J."/>
            <person name="Pavesi G."/>
            <person name="Pesole G."/>
            <person name="Petrovsky N."/>
            <person name="Piazza S."/>
            <person name="Reed J."/>
            <person name="Reid J.F."/>
            <person name="Ring B.Z."/>
            <person name="Ringwald M."/>
            <person name="Rost B."/>
            <person name="Ruan Y."/>
            <person name="Salzberg S.L."/>
            <person name="Sandelin A."/>
            <person name="Schneider C."/>
            <person name="Schoenbach C."/>
            <person name="Sekiguchi K."/>
            <person name="Semple C.A."/>
            <person name="Seno S."/>
            <person name="Sessa L."/>
            <person name="Sheng Y."/>
            <person name="Shibata Y."/>
            <person name="Shimada H."/>
            <person name="Shimada K."/>
            <person name="Silva D."/>
            <person name="Sinclair B."/>
            <person name="Sperling S."/>
            <person name="Stupka E."/>
            <person name="Sugiura K."/>
            <person name="Sultana R."/>
            <person name="Takenaka Y."/>
            <person name="Taki K."/>
            <person name="Tammoja K."/>
            <person name="Tan S.L."/>
            <person name="Tang S."/>
            <person name="Taylor M.S."/>
            <person name="Tegner J."/>
            <person name="Teichmann S.A."/>
            <person name="Ueda H.R."/>
            <person name="van Nimwegen E."/>
            <person name="Verardo R."/>
            <person name="Wei C.L."/>
            <person name="Yagi K."/>
            <person name="Yamanishi H."/>
            <person name="Zabarovsky E."/>
            <person name="Zhu S."/>
            <person name="Zimmer A."/>
            <person name="Hide W."/>
            <person name="Bult C."/>
            <person name="Grimmond S.M."/>
            <person name="Teasdale R.D."/>
            <person name="Liu E.T."/>
            <person name="Brusic V."/>
            <person name="Quackenbush J."/>
            <person name="Wahlestedt C."/>
            <person name="Mattick J.S."/>
            <person name="Hume D.A."/>
            <person name="Kai C."/>
            <person name="Sasaki D."/>
            <person name="Tomaru Y."/>
            <person name="Fukuda S."/>
            <person name="Kanamori-Katayama M."/>
            <person name="Suzuki M."/>
            <person name="Aoki J."/>
            <person name="Arakawa T."/>
            <person name="Iida J."/>
            <person name="Imamura K."/>
            <person name="Itoh M."/>
            <person name="Kato T."/>
            <person name="Kawaji H."/>
            <person name="Kawagashira N."/>
            <person name="Kawashima T."/>
            <person name="Kojima M."/>
            <person name="Kondo S."/>
            <person name="Konno H."/>
            <person name="Nakano K."/>
            <person name="Ninomiya N."/>
            <person name="Nishio T."/>
            <person name="Okada M."/>
            <person name="Plessy C."/>
            <person name="Shibata K."/>
            <person name="Shiraki T."/>
            <person name="Suzuki S."/>
            <person name="Tagami M."/>
            <person name="Waki K."/>
            <person name="Watahiki A."/>
            <person name="Okamura-Oho Y."/>
            <person name="Suzuki H."/>
            <person name="Kawai J."/>
            <person name="Hayashizaki Y."/>
        </authorList>
    </citation>
    <scope>NUCLEOTIDE SEQUENCE [LARGE SCALE MRNA]</scope>
    <source>
        <strain>C57BL/6J</strain>
        <tissue>Liver</tissue>
    </source>
</reference>
<sequence>MAAARPDPPIPSSPTRESPSPEPPDLVLVPDGRPVTPPGDLIEIQVVKVTDTTSVPEPPEPGSFHCALCPAAFRLVSELLFHEHGHLASMEGLGQDGDPSRCHVCGHSCPGPASLRAHYSLHTGERPYRCSLCPRAFKALAPLLRHQHRHGVEPGTSERLLPTTTTGQPNSRVAQERSEVVMAAAAAGAVVGKPFACRFCAKPFRRSSDMRDHERVHTGERPYHCSICGKGFTQSSVLSGHARIHTGERPFRCMLCDRTFNNSSNFRKHQRTHFHGPGSGVGESRGQLRSSSVSQES</sequence>
<accession>Q8BI69</accession>
<organism>
    <name type="scientific">Mus musculus</name>
    <name type="common">Mouse</name>
    <dbReference type="NCBI Taxonomy" id="10090"/>
    <lineage>
        <taxon>Eukaryota</taxon>
        <taxon>Metazoa</taxon>
        <taxon>Chordata</taxon>
        <taxon>Craniata</taxon>
        <taxon>Vertebrata</taxon>
        <taxon>Euteleostomi</taxon>
        <taxon>Mammalia</taxon>
        <taxon>Eutheria</taxon>
        <taxon>Euarchontoglires</taxon>
        <taxon>Glires</taxon>
        <taxon>Rodentia</taxon>
        <taxon>Myomorpha</taxon>
        <taxon>Muroidea</taxon>
        <taxon>Muridae</taxon>
        <taxon>Murinae</taxon>
        <taxon>Mus</taxon>
        <taxon>Mus</taxon>
    </lineage>
</organism>
<feature type="chain" id="PRO_0000270997" description="Zinc finger protein 784">
    <location>
        <begin position="1"/>
        <end position="297"/>
    </location>
</feature>
<feature type="zinc finger region" description="C2H2-type 1" evidence="2">
    <location>
        <begin position="64"/>
        <end position="86"/>
    </location>
</feature>
<feature type="zinc finger region" description="C2H2-type 2" evidence="2">
    <location>
        <begin position="100"/>
        <end position="122"/>
    </location>
</feature>
<feature type="zinc finger region" description="C2H2-type 3" evidence="2">
    <location>
        <begin position="128"/>
        <end position="150"/>
    </location>
</feature>
<feature type="zinc finger region" description="C2H2-type 4" evidence="2">
    <location>
        <begin position="195"/>
        <end position="217"/>
    </location>
</feature>
<feature type="zinc finger region" description="C2H2-type 5" evidence="2">
    <location>
        <begin position="223"/>
        <end position="245"/>
    </location>
</feature>
<feature type="zinc finger region" description="C2H2-type 6" evidence="2">
    <location>
        <begin position="251"/>
        <end position="273"/>
    </location>
</feature>
<feature type="region of interest" description="Disordered" evidence="3">
    <location>
        <begin position="1"/>
        <end position="39"/>
    </location>
</feature>
<feature type="region of interest" description="Disordered" evidence="3">
    <location>
        <begin position="149"/>
        <end position="175"/>
    </location>
</feature>
<feature type="region of interest" description="Disordered" evidence="3">
    <location>
        <begin position="268"/>
        <end position="297"/>
    </location>
</feature>
<feature type="compositionally biased region" description="Pro residues" evidence="3">
    <location>
        <begin position="1"/>
        <end position="12"/>
    </location>
</feature>
<feature type="compositionally biased region" description="Polar residues" evidence="3">
    <location>
        <begin position="162"/>
        <end position="173"/>
    </location>
</feature>
<feature type="compositionally biased region" description="Polar residues" evidence="3">
    <location>
        <begin position="287"/>
        <end position="297"/>
    </location>
</feature>
<feature type="modified residue" description="Phosphoserine" evidence="1">
    <location>
        <position position="13"/>
    </location>
</feature>
<comment type="function">
    <text>May be involved in transcriptional regulation.</text>
</comment>
<comment type="subcellular location">
    <subcellularLocation>
        <location evidence="4">Nucleus</location>
    </subcellularLocation>
</comment>
<comment type="similarity">
    <text evidence="4">Belongs to the krueppel C2H2-type zinc-finger protein family.</text>
</comment>
<proteinExistence type="evidence at transcript level"/>
<protein>
    <recommendedName>
        <fullName>Zinc finger protein 784</fullName>
    </recommendedName>
</protein>